<evidence type="ECO:0000255" key="1">
    <source>
        <dbReference type="PROSITE-ProRule" id="PRU00303"/>
    </source>
</evidence>
<evidence type="ECO:0000305" key="2"/>
<evidence type="ECO:0007829" key="3">
    <source>
        <dbReference type="PDB" id="2JWY"/>
    </source>
</evidence>
<feature type="signal peptide" evidence="1">
    <location>
        <begin position="1"/>
        <end position="19"/>
    </location>
</feature>
<feature type="chain" id="PRO_0000018044" description="Uncharacterized lipoprotein YajI">
    <location>
        <begin position="20"/>
        <end position="179"/>
    </location>
</feature>
<feature type="lipid moiety-binding region" description="N-palmitoyl cysteine" evidence="1">
    <location>
        <position position="20"/>
    </location>
</feature>
<feature type="lipid moiety-binding region" description="S-diacylglycerol cysteine" evidence="1">
    <location>
        <position position="20"/>
    </location>
</feature>
<feature type="helix" evidence="3">
    <location>
        <begin position="45"/>
        <end position="59"/>
    </location>
</feature>
<feature type="strand" evidence="3">
    <location>
        <begin position="61"/>
        <end position="66"/>
    </location>
</feature>
<feature type="turn" evidence="3">
    <location>
        <begin position="68"/>
        <end position="70"/>
    </location>
</feature>
<feature type="strand" evidence="3">
    <location>
        <begin position="74"/>
        <end position="77"/>
    </location>
</feature>
<feature type="strand" evidence="3">
    <location>
        <begin position="82"/>
        <end position="92"/>
    </location>
</feature>
<feature type="strand" evidence="3">
    <location>
        <begin position="94"/>
        <end position="109"/>
    </location>
</feature>
<feature type="strand" evidence="3">
    <location>
        <begin position="114"/>
        <end position="123"/>
    </location>
</feature>
<feature type="strand" evidence="3">
    <location>
        <begin position="127"/>
        <end position="129"/>
    </location>
</feature>
<feature type="strand" evidence="3">
    <location>
        <begin position="132"/>
        <end position="142"/>
    </location>
</feature>
<feature type="strand" evidence="3">
    <location>
        <begin position="147"/>
        <end position="149"/>
    </location>
</feature>
<feature type="strand" evidence="3">
    <location>
        <begin position="151"/>
        <end position="158"/>
    </location>
</feature>
<feature type="helix" evidence="3">
    <location>
        <begin position="163"/>
        <end position="165"/>
    </location>
</feature>
<feature type="strand" evidence="3">
    <location>
        <begin position="168"/>
        <end position="176"/>
    </location>
</feature>
<accession>P46122</accession>
<accession>Q2MC14</accession>
<gene>
    <name type="primary">yajI</name>
    <name type="ordered locus">b0412</name>
    <name type="ordered locus">JW5056</name>
</gene>
<organism>
    <name type="scientific">Escherichia coli (strain K12)</name>
    <dbReference type="NCBI Taxonomy" id="83333"/>
    <lineage>
        <taxon>Bacteria</taxon>
        <taxon>Pseudomonadati</taxon>
        <taxon>Pseudomonadota</taxon>
        <taxon>Gammaproteobacteria</taxon>
        <taxon>Enterobacterales</taxon>
        <taxon>Enterobacteriaceae</taxon>
        <taxon>Escherichia</taxon>
    </lineage>
</organism>
<protein>
    <recommendedName>
        <fullName>Uncharacterized lipoprotein YajI</fullName>
    </recommendedName>
</protein>
<comment type="subcellular location">
    <subcellularLocation>
        <location evidence="2">Cell membrane</location>
        <topology evidence="2">Lipid-anchor</topology>
    </subcellularLocation>
</comment>
<comment type="sequence caution" evidence="2">
    <conflict type="erroneous initiation">
        <sequence resource="EMBL-CDS" id="AAA74983"/>
    </conflict>
    <text>Extended N-terminus.</text>
</comment>
<comment type="sequence caution" evidence="2">
    <conflict type="erroneous initiation">
        <sequence resource="EMBL-CDS" id="AAB40168"/>
    </conflict>
    <text>Extended N-terminus.</text>
</comment>
<proteinExistence type="evidence at protein level"/>
<keyword id="KW-0002">3D-structure</keyword>
<keyword id="KW-1003">Cell membrane</keyword>
<keyword id="KW-0449">Lipoprotein</keyword>
<keyword id="KW-0472">Membrane</keyword>
<keyword id="KW-0564">Palmitate</keyword>
<keyword id="KW-1185">Reference proteome</keyword>
<keyword id="KW-0732">Signal</keyword>
<reference key="1">
    <citation type="submission" date="1995-07" db="EMBL/GenBank/DDBJ databases">
        <authorList>
            <person name="Lin D."/>
            <person name="Allen E."/>
            <person name="Araujo R."/>
            <person name="Aparicio A.M."/>
            <person name="Botstein D."/>
            <person name="Cherry M."/>
            <person name="Chung E."/>
            <person name="Dietrich F."/>
            <person name="Duncan M."/>
            <person name="Federspiel N."/>
            <person name="Kalman S."/>
            <person name="Kim K."/>
            <person name="Komp C."/>
            <person name="Lashkari D."/>
            <person name="Lew H."/>
            <person name="Namath A."/>
            <person name="Oefner P."/>
            <person name="Schroff N."/>
            <person name="Winant A."/>
            <person name="Davis R."/>
        </authorList>
    </citation>
    <scope>NUCLEOTIDE SEQUENCE [GENOMIC DNA]</scope>
    <source>
        <strain>K12 / MG1655 / ATCC 47076</strain>
    </source>
</reference>
<reference key="2">
    <citation type="submission" date="1997-01" db="EMBL/GenBank/DDBJ databases">
        <title>Sequence of minutes 4-25 of Escherichia coli.</title>
        <authorList>
            <person name="Chung E."/>
            <person name="Allen E."/>
            <person name="Araujo R."/>
            <person name="Aparicio A.M."/>
            <person name="Davis K."/>
            <person name="Duncan M."/>
            <person name="Federspiel N."/>
            <person name="Hyman R."/>
            <person name="Kalman S."/>
            <person name="Komp C."/>
            <person name="Kurdi O."/>
            <person name="Lew H."/>
            <person name="Lin D."/>
            <person name="Namath A."/>
            <person name="Oefner P."/>
            <person name="Roberts D."/>
            <person name="Schramm S."/>
            <person name="Davis R.W."/>
        </authorList>
    </citation>
    <scope>NUCLEOTIDE SEQUENCE [LARGE SCALE GENOMIC DNA]</scope>
    <source>
        <strain>K12 / MG1655 / ATCC 47076</strain>
    </source>
</reference>
<reference key="3">
    <citation type="journal article" date="1997" name="Science">
        <title>The complete genome sequence of Escherichia coli K-12.</title>
        <authorList>
            <person name="Blattner F.R."/>
            <person name="Plunkett G. III"/>
            <person name="Bloch C.A."/>
            <person name="Perna N.T."/>
            <person name="Burland V."/>
            <person name="Riley M."/>
            <person name="Collado-Vides J."/>
            <person name="Glasner J.D."/>
            <person name="Rode C.K."/>
            <person name="Mayhew G.F."/>
            <person name="Gregor J."/>
            <person name="Davis N.W."/>
            <person name="Kirkpatrick H.A."/>
            <person name="Goeden M.A."/>
            <person name="Rose D.J."/>
            <person name="Mau B."/>
            <person name="Shao Y."/>
        </authorList>
    </citation>
    <scope>NUCLEOTIDE SEQUENCE [LARGE SCALE GENOMIC DNA]</scope>
    <source>
        <strain>K12 / MG1655 / ATCC 47076</strain>
    </source>
</reference>
<reference key="4">
    <citation type="journal article" date="2006" name="Mol. Syst. Biol.">
        <title>Highly accurate genome sequences of Escherichia coli K-12 strains MG1655 and W3110.</title>
        <authorList>
            <person name="Hayashi K."/>
            <person name="Morooka N."/>
            <person name="Yamamoto Y."/>
            <person name="Fujita K."/>
            <person name="Isono K."/>
            <person name="Choi S."/>
            <person name="Ohtsubo E."/>
            <person name="Baba T."/>
            <person name="Wanner B.L."/>
            <person name="Mori H."/>
            <person name="Horiuchi T."/>
        </authorList>
    </citation>
    <scope>NUCLEOTIDE SEQUENCE [LARGE SCALE GENOMIC DNA]</scope>
    <source>
        <strain>K12 / W3110 / ATCC 27325 / DSM 5911</strain>
    </source>
</reference>
<reference key="5">
    <citation type="journal article" date="1992" name="Mol. Gen. Genet.">
        <title>Insertional disruption of the nusB (ssyB) gene leads to cold-sensitive growth of Escherichia coli and suppression of the secY24 mutation.</title>
        <authorList>
            <person name="Taura T."/>
            <person name="Ueguchi C."/>
            <person name="Shiba K."/>
            <person name="Ito K."/>
        </authorList>
    </citation>
    <scope>NUCLEOTIDE SEQUENCE [GENOMIC DNA] OF 1-80</scope>
    <source>
        <strain>K12</strain>
    </source>
</reference>
<reference key="6">
    <citation type="journal article" date="1995" name="Nucleic Acids Res.">
        <title>Detection of new genes in a bacterial genome using Markov models for three gene classes.</title>
        <authorList>
            <person name="Borodovsky M."/>
            <person name="McIninch J."/>
            <person name="Koonin E.V."/>
            <person name="Rudd K.E."/>
            <person name="Medigue C."/>
            <person name="Danchin A."/>
        </authorList>
    </citation>
    <scope>IDENTIFICATION</scope>
</reference>
<dbReference type="EMBL" id="U31810">
    <property type="protein sequence ID" value="AAA74983.1"/>
    <property type="status" value="ALT_INIT"/>
    <property type="molecule type" value="Genomic_DNA"/>
</dbReference>
<dbReference type="EMBL" id="U82664">
    <property type="protein sequence ID" value="AAB40168.1"/>
    <property type="status" value="ALT_INIT"/>
    <property type="molecule type" value="Genomic_DNA"/>
</dbReference>
<dbReference type="EMBL" id="U00096">
    <property type="protein sequence ID" value="AAC73515.2"/>
    <property type="molecule type" value="Genomic_DNA"/>
</dbReference>
<dbReference type="EMBL" id="AP009048">
    <property type="protein sequence ID" value="BAE76192.1"/>
    <property type="molecule type" value="Genomic_DNA"/>
</dbReference>
<dbReference type="EMBL" id="X64395">
    <property type="status" value="NOT_ANNOTATED_CDS"/>
    <property type="molecule type" value="Genomic_DNA"/>
</dbReference>
<dbReference type="PIR" id="D64770">
    <property type="entry name" value="D64770"/>
</dbReference>
<dbReference type="RefSeq" id="NP_414946.4">
    <property type="nucleotide sequence ID" value="NC_000913.3"/>
</dbReference>
<dbReference type="RefSeq" id="WP_001326929.1">
    <property type="nucleotide sequence ID" value="NZ_SSZK01000009.1"/>
</dbReference>
<dbReference type="PDB" id="2JWY">
    <property type="method" value="NMR"/>
    <property type="chains" value="A=21-179"/>
</dbReference>
<dbReference type="PDBsum" id="2JWY"/>
<dbReference type="BMRB" id="P46122"/>
<dbReference type="SMR" id="P46122"/>
<dbReference type="BioGRID" id="4261730">
    <property type="interactions" value="286"/>
</dbReference>
<dbReference type="STRING" id="511145.b0412"/>
<dbReference type="jPOST" id="P46122"/>
<dbReference type="PaxDb" id="511145-b0412"/>
<dbReference type="EnsemblBacteria" id="AAC73515">
    <property type="protein sequence ID" value="AAC73515"/>
    <property type="gene ID" value="b0412"/>
</dbReference>
<dbReference type="GeneID" id="947233"/>
<dbReference type="KEGG" id="ecj:JW5056"/>
<dbReference type="KEGG" id="eco:b0412"/>
<dbReference type="KEGG" id="ecoc:C3026_02010"/>
<dbReference type="PATRIC" id="fig|1411691.4.peg.1865"/>
<dbReference type="EchoBASE" id="EB2712"/>
<dbReference type="eggNOG" id="COG4238">
    <property type="taxonomic scope" value="Bacteria"/>
</dbReference>
<dbReference type="HOGENOM" id="CLU_100508_0_0_6"/>
<dbReference type="InParanoid" id="P46122"/>
<dbReference type="OMA" id="CAQQSEV"/>
<dbReference type="OrthoDB" id="6504692at2"/>
<dbReference type="PhylomeDB" id="P46122"/>
<dbReference type="BioCyc" id="EcoCyc:EG12874-MONOMER"/>
<dbReference type="EvolutionaryTrace" id="P46122"/>
<dbReference type="PRO" id="PR:P46122"/>
<dbReference type="Proteomes" id="UP000000625">
    <property type="component" value="Chromosome"/>
</dbReference>
<dbReference type="GO" id="GO:0005886">
    <property type="term" value="C:plasma membrane"/>
    <property type="evidence" value="ECO:0007669"/>
    <property type="project" value="UniProtKB-SubCell"/>
</dbReference>
<dbReference type="Gene3D" id="2.60.40.1620">
    <property type="entry name" value="Lipoprotein YajI-like"/>
    <property type="match status" value="1"/>
</dbReference>
<dbReference type="InterPro" id="IPR021658">
    <property type="entry name" value="DUF3251"/>
</dbReference>
<dbReference type="InterPro" id="IPR037125">
    <property type="entry name" value="YajI-like_sf"/>
</dbReference>
<dbReference type="NCBIfam" id="NF008575">
    <property type="entry name" value="PRK11530.1"/>
    <property type="match status" value="1"/>
</dbReference>
<dbReference type="Pfam" id="PF11622">
    <property type="entry name" value="DUF3251"/>
    <property type="match status" value="1"/>
</dbReference>
<dbReference type="PROSITE" id="PS51257">
    <property type="entry name" value="PROKAR_LIPOPROTEIN"/>
    <property type="match status" value="1"/>
</dbReference>
<sequence length="179" mass="19560">MNTNVFRLLLLGSLFSLSACVQQSEVRQMKHSVSTLNQEMTQLNQETVKITQQNRLNAKSSSGVYLLPGAKTPARLESQIGTLRMSLVNITPDADGTTLTLRIQGESNDPLPAFSGTVEYGQIQGTIDNFQEINVQNQLINAPASVLAPSDVDIPLQLKGISVDQLGFVRIHDIQPVMQ</sequence>
<name>YAJI_ECOLI</name>